<reference key="1">
    <citation type="submission" date="1997-06" db="EMBL/GenBank/DDBJ databases">
        <authorList>
            <person name="Regev I."/>
            <person name="Khayat E."/>
            <person name="Gepstein S."/>
        </authorList>
    </citation>
    <scope>NUCLEOTIDE SEQUENCE [MRNA]</scope>
    <source>
        <tissue>Leaf</tissue>
    </source>
</reference>
<feature type="transit peptide" description="Chloroplast" evidence="1">
    <location>
        <begin position="1"/>
        <end position="57"/>
    </location>
</feature>
<feature type="chain" id="PRO_0000031533" description="Ribulose bisphosphate carboxylase small subunit, chloroplastic" evidence="1">
    <location>
        <begin position="58"/>
        <end position="180"/>
    </location>
</feature>
<sequence length="180" mass="20511">MVSSMMVSSAATFTRASPAQSSMVAPFTGLKSASAFPVTRKPNADLSHLPSNGGRVQCMKVWPIEGVKKFETLSYLPTMKDEALVKQIEYLLRSKWIPCLEFCPKGFVWRENHRSPGYYDGRYWTMWKLPMFGCTDAVQVAKEVEECKKEYPHAFIRIIGFDNNRQVQCISFIAYKPTGY</sequence>
<accession>O24045</accession>
<keyword id="KW-0113">Calvin cycle</keyword>
<keyword id="KW-0120">Carbon dioxide fixation</keyword>
<keyword id="KW-0150">Chloroplast</keyword>
<keyword id="KW-0601">Photorespiration</keyword>
<keyword id="KW-0602">Photosynthesis</keyword>
<keyword id="KW-0934">Plastid</keyword>
<keyword id="KW-0809">Transit peptide</keyword>
<proteinExistence type="evidence at transcript level"/>
<name>RBS_MUSAC</name>
<protein>
    <recommendedName>
        <fullName evidence="1">Ribulose bisphosphate carboxylase small subunit, chloroplastic</fullName>
        <shortName evidence="1">RuBisCO small subunit</shortName>
    </recommendedName>
</protein>
<organism>
    <name type="scientific">Musa acuminata</name>
    <name type="common">Banana</name>
    <name type="synonym">Musa cavendishii</name>
    <dbReference type="NCBI Taxonomy" id="4641"/>
    <lineage>
        <taxon>Eukaryota</taxon>
        <taxon>Viridiplantae</taxon>
        <taxon>Streptophyta</taxon>
        <taxon>Embryophyta</taxon>
        <taxon>Tracheophyta</taxon>
        <taxon>Spermatophyta</taxon>
        <taxon>Magnoliopsida</taxon>
        <taxon>Liliopsida</taxon>
        <taxon>Zingiberales</taxon>
        <taxon>Musaceae</taxon>
        <taxon>Musa</taxon>
    </lineage>
</organism>
<gene>
    <name evidence="1" type="primary">RBCS</name>
    <name type="synonym">RBCS1</name>
</gene>
<comment type="function">
    <text evidence="1">RuBisCO catalyzes two reactions: the carboxylation of D-ribulose 1,5-bisphosphate, the primary event in carbon dioxide fixation, as well as the oxidative fragmentation of the pentose substrate. Both reactions occur simultaneously and in competition at the same active site. Although the small subunit is not catalytic it is essential for maximal activity.</text>
</comment>
<comment type="subunit">
    <text evidence="1">Heterohexadecamer of 8 large and 8 small subunits.</text>
</comment>
<comment type="subcellular location">
    <subcellularLocation>
        <location evidence="1">Plastid</location>
        <location evidence="1">Chloroplast</location>
    </subcellularLocation>
</comment>
<comment type="miscellaneous">
    <text evidence="1">The basic functional RuBisCO is composed of a large chain homodimer in a 'head-to-tail' conformation. In form I RuBisCO this homodimer is arranged in a barrel-like tetramer with the small subunits forming a tetrameric 'cap' on each end of the 'barrel'.</text>
</comment>
<comment type="similarity">
    <text evidence="1">Belongs to the RuBisCO small chain family.</text>
</comment>
<dbReference type="EMBL" id="AF008214">
    <property type="protein sequence ID" value="AAB63287.1"/>
    <property type="molecule type" value="mRNA"/>
</dbReference>
<dbReference type="SMR" id="O24045"/>
<dbReference type="GO" id="GO:0009507">
    <property type="term" value="C:chloroplast"/>
    <property type="evidence" value="ECO:0007669"/>
    <property type="project" value="UniProtKB-SubCell"/>
</dbReference>
<dbReference type="GO" id="GO:0016984">
    <property type="term" value="F:ribulose-bisphosphate carboxylase activity"/>
    <property type="evidence" value="ECO:0007669"/>
    <property type="project" value="UniProtKB-UniRule"/>
</dbReference>
<dbReference type="GO" id="GO:0009853">
    <property type="term" value="P:photorespiration"/>
    <property type="evidence" value="ECO:0007669"/>
    <property type="project" value="UniProtKB-KW"/>
</dbReference>
<dbReference type="GO" id="GO:0019253">
    <property type="term" value="P:reductive pentose-phosphate cycle"/>
    <property type="evidence" value="ECO:0007669"/>
    <property type="project" value="UniProtKB-UniRule"/>
</dbReference>
<dbReference type="CDD" id="cd03527">
    <property type="entry name" value="RuBisCO_small"/>
    <property type="match status" value="1"/>
</dbReference>
<dbReference type="FunFam" id="3.30.190.10:FF:000001">
    <property type="entry name" value="Ribulose bisphosphate carboxylase small chain, chloroplastic"/>
    <property type="match status" value="1"/>
</dbReference>
<dbReference type="Gene3D" id="3.30.190.10">
    <property type="entry name" value="Ribulose bisphosphate carboxylase, small subunit"/>
    <property type="match status" value="1"/>
</dbReference>
<dbReference type="HAMAP" id="MF_00859">
    <property type="entry name" value="RuBisCO_S_bact"/>
    <property type="match status" value="1"/>
</dbReference>
<dbReference type="InterPro" id="IPR024681">
    <property type="entry name" value="RuBisCO_ssu"/>
</dbReference>
<dbReference type="InterPro" id="IPR000894">
    <property type="entry name" value="RuBisCO_ssu_dom"/>
</dbReference>
<dbReference type="InterPro" id="IPR024680">
    <property type="entry name" value="RuBisCO_ssu_N"/>
</dbReference>
<dbReference type="InterPro" id="IPR036385">
    <property type="entry name" value="RuBisCO_ssu_sf"/>
</dbReference>
<dbReference type="PANTHER" id="PTHR31262">
    <property type="entry name" value="RIBULOSE BISPHOSPHATE CARBOXYLASE SMALL CHAIN 1, CHLOROPLASTIC"/>
    <property type="match status" value="1"/>
</dbReference>
<dbReference type="PANTHER" id="PTHR31262:SF10">
    <property type="entry name" value="RIBULOSE BISPHOSPHATE CARBOXYLASE SMALL SUBUNIT 1A, CHLOROPLASTIC-RELATED"/>
    <property type="match status" value="1"/>
</dbReference>
<dbReference type="Pfam" id="PF12338">
    <property type="entry name" value="RbcS"/>
    <property type="match status" value="1"/>
</dbReference>
<dbReference type="Pfam" id="PF00101">
    <property type="entry name" value="RuBisCO_small"/>
    <property type="match status" value="1"/>
</dbReference>
<dbReference type="PRINTS" id="PR00152">
    <property type="entry name" value="RUBISCOSMALL"/>
</dbReference>
<dbReference type="SMART" id="SM00961">
    <property type="entry name" value="RuBisCO_small"/>
    <property type="match status" value="1"/>
</dbReference>
<dbReference type="SUPFAM" id="SSF55239">
    <property type="entry name" value="RuBisCO, small subunit"/>
    <property type="match status" value="1"/>
</dbReference>
<evidence type="ECO:0000255" key="1">
    <source>
        <dbReference type="HAMAP-Rule" id="MF_00860"/>
    </source>
</evidence>